<name>ASHWN_BOVIN</name>
<protein>
    <recommendedName>
        <fullName>Ashwin</fullName>
    </recommendedName>
</protein>
<reference key="1">
    <citation type="submission" date="2007-02" db="EMBL/GenBank/DDBJ databases">
        <authorList>
            <consortium name="NIH - Mammalian Gene Collection (MGC) project"/>
        </authorList>
    </citation>
    <scope>NUCLEOTIDE SEQUENCE [LARGE SCALE MRNA]</scope>
    <source>
        <strain>Hereford</strain>
        <tissue>Basal ganglia</tissue>
    </source>
</reference>
<accession>A2VDP0</accession>
<feature type="chain" id="PRO_0000284950" description="Ashwin">
    <location>
        <begin position="1"/>
        <end position="232"/>
    </location>
</feature>
<feature type="region of interest" description="Disordered" evidence="3">
    <location>
        <begin position="64"/>
        <end position="232"/>
    </location>
</feature>
<feature type="compositionally biased region" description="Basic and acidic residues" evidence="3">
    <location>
        <begin position="64"/>
        <end position="97"/>
    </location>
</feature>
<feature type="compositionally biased region" description="Basic and acidic residues" evidence="3">
    <location>
        <begin position="116"/>
        <end position="127"/>
    </location>
</feature>
<feature type="compositionally biased region" description="Polar residues" evidence="3">
    <location>
        <begin position="130"/>
        <end position="140"/>
    </location>
</feature>
<feature type="compositionally biased region" description="Low complexity" evidence="3">
    <location>
        <begin position="144"/>
        <end position="156"/>
    </location>
</feature>
<feature type="compositionally biased region" description="Basic and acidic residues" evidence="3">
    <location>
        <begin position="163"/>
        <end position="179"/>
    </location>
</feature>
<feature type="modified residue" description="Phosphoserine" evidence="2">
    <location>
        <position position="143"/>
    </location>
</feature>
<feature type="modified residue" description="Phosphoserine" evidence="2">
    <location>
        <position position="182"/>
    </location>
</feature>
<feature type="modified residue" description="Phosphoserine" evidence="2">
    <location>
        <position position="189"/>
    </location>
</feature>
<feature type="modified residue" description="Phosphoserine" evidence="2">
    <location>
        <position position="193"/>
    </location>
</feature>
<feature type="modified residue" description="Phosphothreonine" evidence="2">
    <location>
        <position position="198"/>
    </location>
</feature>
<sequence>MAGDVGGRSCTDSELLLHPELLSQEFLLLTLEQKNITVENDMRVNKDSLTDLYVQHAIPLPQRDLPKSRWGKMMEKKREQHEIKKETKRSSPADGLRKRPLIVFDGSSTSTTIKVKKTENGDNDRLRPQPQASATSNTFRKSSDSSSSVSPLVLSSNLPTNNKMEHGNNDNKQNHDLTHRKSPLGPVRSPPLSPVGATPVKLKRAAPKEEAEASINLKPPEAKRKIQHVTWP</sequence>
<evidence type="ECO:0000250" key="1"/>
<evidence type="ECO:0000250" key="2">
    <source>
        <dbReference type="UniProtKB" id="Q9BVC5"/>
    </source>
</evidence>
<evidence type="ECO:0000256" key="3">
    <source>
        <dbReference type="SAM" id="MobiDB-lite"/>
    </source>
</evidence>
<evidence type="ECO:0000305" key="4"/>
<comment type="subunit">
    <text evidence="1">Component of the tRNA-splicing ligase complex.</text>
</comment>
<comment type="subcellular location">
    <subcellularLocation>
        <location evidence="2">Nucleus</location>
    </subcellularLocation>
</comment>
<comment type="similarity">
    <text evidence="4">Belongs to the ashwin family.</text>
</comment>
<proteinExistence type="evidence at transcript level"/>
<keyword id="KW-0539">Nucleus</keyword>
<keyword id="KW-0597">Phosphoprotein</keyword>
<keyword id="KW-1185">Reference proteome</keyword>
<organism>
    <name type="scientific">Bos taurus</name>
    <name type="common">Bovine</name>
    <dbReference type="NCBI Taxonomy" id="9913"/>
    <lineage>
        <taxon>Eukaryota</taxon>
        <taxon>Metazoa</taxon>
        <taxon>Chordata</taxon>
        <taxon>Craniata</taxon>
        <taxon>Vertebrata</taxon>
        <taxon>Euteleostomi</taxon>
        <taxon>Mammalia</taxon>
        <taxon>Eutheria</taxon>
        <taxon>Laurasiatheria</taxon>
        <taxon>Artiodactyla</taxon>
        <taxon>Ruminantia</taxon>
        <taxon>Pecora</taxon>
        <taxon>Bovidae</taxon>
        <taxon>Bovinae</taxon>
        <taxon>Bos</taxon>
    </lineage>
</organism>
<dbReference type="EMBL" id="BC133333">
    <property type="protein sequence ID" value="AAI33334.1"/>
    <property type="molecule type" value="mRNA"/>
</dbReference>
<dbReference type="RefSeq" id="NP_001075008.1">
    <property type="nucleotide sequence ID" value="NM_001081539.1"/>
</dbReference>
<dbReference type="RefSeq" id="XP_024854795.1">
    <property type="nucleotide sequence ID" value="XM_024999027.2"/>
</dbReference>
<dbReference type="SMR" id="A2VDP0"/>
<dbReference type="FunCoup" id="A2VDP0">
    <property type="interactions" value="3827"/>
</dbReference>
<dbReference type="STRING" id="9913.ENSBTAP00000016358"/>
<dbReference type="PaxDb" id="9913-ENSBTAP00000016358"/>
<dbReference type="GeneID" id="540024"/>
<dbReference type="KEGG" id="bta:540024"/>
<dbReference type="CTD" id="540024"/>
<dbReference type="VEuPathDB" id="HostDB:ENSBTAG00000012332"/>
<dbReference type="eggNOG" id="ENOG502S0PQ">
    <property type="taxonomic scope" value="Eukaryota"/>
</dbReference>
<dbReference type="HOGENOM" id="CLU_104242_0_0_1"/>
<dbReference type="InParanoid" id="A2VDP0"/>
<dbReference type="OMA" id="WGKLMEK"/>
<dbReference type="OrthoDB" id="10071059at2759"/>
<dbReference type="TreeFam" id="TF332084"/>
<dbReference type="Proteomes" id="UP000009136">
    <property type="component" value="Chromosome 11"/>
</dbReference>
<dbReference type="Bgee" id="ENSBTAG00000012332">
    <property type="expression patterns" value="Expressed in oocyte and 106 other cell types or tissues"/>
</dbReference>
<dbReference type="GO" id="GO:0005654">
    <property type="term" value="C:nucleoplasm"/>
    <property type="evidence" value="ECO:0007669"/>
    <property type="project" value="Ensembl"/>
</dbReference>
<dbReference type="GO" id="GO:0005634">
    <property type="term" value="C:nucleus"/>
    <property type="evidence" value="ECO:0000250"/>
    <property type="project" value="UniProtKB"/>
</dbReference>
<dbReference type="GO" id="GO:0072669">
    <property type="term" value="C:tRNA-splicing ligase complex"/>
    <property type="evidence" value="ECO:0000250"/>
    <property type="project" value="UniProtKB"/>
</dbReference>
<dbReference type="GO" id="GO:0048598">
    <property type="term" value="P:embryonic morphogenesis"/>
    <property type="evidence" value="ECO:0007669"/>
    <property type="project" value="InterPro"/>
</dbReference>
<dbReference type="InterPro" id="IPR024887">
    <property type="entry name" value="Ashwin"/>
</dbReference>
<dbReference type="PANTHER" id="PTHR28359">
    <property type="entry name" value="ASHWIN"/>
    <property type="match status" value="1"/>
</dbReference>
<dbReference type="PANTHER" id="PTHR28359:SF1">
    <property type="entry name" value="ASHWIN"/>
    <property type="match status" value="1"/>
</dbReference>
<dbReference type="Pfam" id="PF15323">
    <property type="entry name" value="Ashwin"/>
    <property type="match status" value="1"/>
</dbReference>